<proteinExistence type="evidence at protein level"/>
<organism>
    <name type="scientific">Nostoc sp. (strain PCC 7120 / SAG 25.82 / UTEX 2576)</name>
    <dbReference type="NCBI Taxonomy" id="103690"/>
    <lineage>
        <taxon>Bacteria</taxon>
        <taxon>Bacillati</taxon>
        <taxon>Cyanobacteriota</taxon>
        <taxon>Cyanophyceae</taxon>
        <taxon>Nostocales</taxon>
        <taxon>Nostocaceae</taxon>
        <taxon>Nostoc</taxon>
    </lineage>
</organism>
<comment type="function">
    <text>Light-harvesting photosynthetic bile pigment-protein from the phycobiliprotein complex. Allophycocyanin has a maximum absorption at approximately 654 nanometers.</text>
</comment>
<comment type="subunit">
    <text>Heterohexamer of two alpha chains, one alpha-B chain and three beta chains.</text>
</comment>
<comment type="subcellular location">
    <subcellularLocation>
        <location>Cellular thylakoid membrane</location>
        <topology>Peripheral membrane protein</topology>
        <orientation>Cytoplasmic side</orientation>
    </subcellularLocation>
    <text>Forms the core of the phycobilisome.</text>
</comment>
<comment type="PTM">
    <text evidence="3">Contains one covalently linked phycocyanobilin chromophore (Probable). The chromophore is added by phycocyanobilin lyase CpcS 1.</text>
</comment>
<comment type="similarity">
    <text evidence="3">Belongs to the phycobiliprotein family.</text>
</comment>
<reference key="1">
    <citation type="journal article" date="2001" name="DNA Res.">
        <title>Complete genomic sequence of the filamentous nitrogen-fixing cyanobacterium Anabaena sp. strain PCC 7120.</title>
        <authorList>
            <person name="Kaneko T."/>
            <person name="Nakamura Y."/>
            <person name="Wolk C.P."/>
            <person name="Kuritz T."/>
            <person name="Sasamoto S."/>
            <person name="Watanabe A."/>
            <person name="Iriguchi M."/>
            <person name="Ishikawa A."/>
            <person name="Kawashima K."/>
            <person name="Kimura T."/>
            <person name="Kishida Y."/>
            <person name="Kohara M."/>
            <person name="Matsumoto M."/>
            <person name="Matsuno A."/>
            <person name="Muraki A."/>
            <person name="Nakazaki N."/>
            <person name="Shimpo S."/>
            <person name="Sugimoto M."/>
            <person name="Takazawa M."/>
            <person name="Yamada M."/>
            <person name="Yasuda M."/>
            <person name="Tabata S."/>
        </authorList>
    </citation>
    <scope>NUCLEOTIDE SEQUENCE [LARGE SCALE GENOMIC DNA]</scope>
    <source>
        <strain>PCC 7120 / SAG 25.82 / UTEX 2576</strain>
    </source>
</reference>
<reference key="2">
    <citation type="journal article" date="1996" name="Eur. J. Biochem.">
        <title>Isolation, characterization and electron microscopy analysis of a hemidiscoidal phycobilisome type from the cyanobacterium Anabaena sp. PCC 7120.</title>
        <authorList>
            <person name="Ducret A."/>
            <person name="Sidler W."/>
            <person name="Wehrli E."/>
            <person name="Frank G."/>
            <person name="Zuber H."/>
        </authorList>
    </citation>
    <scope>PROTEIN SEQUENCE OF 2-29</scope>
</reference>
<reference key="3">
    <citation type="journal article" date="2007" name="Proc. Natl. Acad. Sci. U.S.A.">
        <title>Phycobilin:cystein-84 biliprotein lyase, a near-universal lyase for cysteine-84-binding sites in cyanobacterial phycobiliproteins.</title>
        <authorList>
            <person name="Zhao K.H."/>
            <person name="Su P."/>
            <person name="Tu J.M."/>
            <person name="Wang X."/>
            <person name="Liu H."/>
            <person name="Ploscher M."/>
            <person name="Eichacker L."/>
            <person name="Yang B."/>
            <person name="Zhou M."/>
            <person name="Scheer H."/>
        </authorList>
    </citation>
    <scope>CHROMOPHORE ATTACHMENT AT CYS-81</scope>
    <source>
        <strain>PCC 7120 / SAG 25.82 / UTEX 2576</strain>
    </source>
</reference>
<accession>P80556</accession>
<dbReference type="EMBL" id="BA000019">
    <property type="protein sequence ID" value="BAB75352.1"/>
    <property type="molecule type" value="Genomic_DNA"/>
</dbReference>
<dbReference type="PIR" id="AF2262">
    <property type="entry name" value="AF2262"/>
</dbReference>
<dbReference type="PIR" id="S66436">
    <property type="entry name" value="S66436"/>
</dbReference>
<dbReference type="RefSeq" id="WP_010997797.1">
    <property type="nucleotide sequence ID" value="NZ_RSCN01000044.1"/>
</dbReference>
<dbReference type="PDB" id="7EYD">
    <property type="method" value="EM"/>
    <property type="resolution" value="3.90 A"/>
    <property type="chains" value="V9/m9=1-161"/>
</dbReference>
<dbReference type="PDBsum" id="7EYD"/>
<dbReference type="EMDB" id="EMD-31381"/>
<dbReference type="SMR" id="P80556"/>
<dbReference type="STRING" id="103690.gene:10495695"/>
<dbReference type="GeneID" id="58726434"/>
<dbReference type="KEGG" id="ana:all3653"/>
<dbReference type="eggNOG" id="ENOG502Z81S">
    <property type="taxonomic scope" value="Bacteria"/>
</dbReference>
<dbReference type="OrthoDB" id="512145at2"/>
<dbReference type="Proteomes" id="UP000002483">
    <property type="component" value="Chromosome"/>
</dbReference>
<dbReference type="GO" id="GO:0030089">
    <property type="term" value="C:phycobilisome"/>
    <property type="evidence" value="ECO:0007669"/>
    <property type="project" value="UniProtKB-KW"/>
</dbReference>
<dbReference type="GO" id="GO:0031676">
    <property type="term" value="C:plasma membrane-derived thylakoid membrane"/>
    <property type="evidence" value="ECO:0007669"/>
    <property type="project" value="UniProtKB-SubCell"/>
</dbReference>
<dbReference type="GO" id="GO:0015979">
    <property type="term" value="P:photosynthesis"/>
    <property type="evidence" value="ECO:0007669"/>
    <property type="project" value="UniProtKB-KW"/>
</dbReference>
<dbReference type="CDD" id="cd12125">
    <property type="entry name" value="APC_alpha"/>
    <property type="match status" value="1"/>
</dbReference>
<dbReference type="Gene3D" id="1.10.490.20">
    <property type="entry name" value="Phycocyanins"/>
    <property type="match status" value="1"/>
</dbReference>
<dbReference type="InterPro" id="IPR009050">
    <property type="entry name" value="Globin-like_sf"/>
</dbReference>
<dbReference type="InterPro" id="IPR012128">
    <property type="entry name" value="Phycobilisome_asu/bsu"/>
</dbReference>
<dbReference type="InterPro" id="IPR038719">
    <property type="entry name" value="Phycobilisome_asu/bsu_sf"/>
</dbReference>
<dbReference type="PANTHER" id="PTHR34011:SF2">
    <property type="entry name" value="ALLOPHYCOCYANIN ALPHA CHAIN"/>
    <property type="match status" value="1"/>
</dbReference>
<dbReference type="PANTHER" id="PTHR34011">
    <property type="entry name" value="PHYCOBILISOME 32.1 KDA LINKER POLYPEPTIDE, PHYCOCYANIN-ASSOCIATED, ROD 2-RELATED"/>
    <property type="match status" value="1"/>
</dbReference>
<dbReference type="Pfam" id="PF00502">
    <property type="entry name" value="Phycobilisome"/>
    <property type="match status" value="1"/>
</dbReference>
<dbReference type="PIRSF" id="PIRSF000081">
    <property type="entry name" value="Phycocyanin"/>
    <property type="match status" value="1"/>
</dbReference>
<dbReference type="SUPFAM" id="SSF46458">
    <property type="entry name" value="Globin-like"/>
    <property type="match status" value="1"/>
</dbReference>
<gene>
    <name type="primary">apcD</name>
    <name type="ordered locus">all3653</name>
</gene>
<keyword id="KW-0002">3D-structure</keyword>
<keyword id="KW-0042">Antenna complex</keyword>
<keyword id="KW-0089">Bile pigment</keyword>
<keyword id="KW-0157">Chromophore</keyword>
<keyword id="KW-0903">Direct protein sequencing</keyword>
<keyword id="KW-0249">Electron transport</keyword>
<keyword id="KW-0472">Membrane</keyword>
<keyword id="KW-0488">Methylation</keyword>
<keyword id="KW-0602">Photosynthesis</keyword>
<keyword id="KW-0605">Phycobilisome</keyword>
<keyword id="KW-1185">Reference proteome</keyword>
<keyword id="KW-0793">Thylakoid</keyword>
<keyword id="KW-0813">Transport</keyword>
<name>APCD_NOSS1</name>
<protein>
    <recommendedName>
        <fullName>Allophycocyanin subunit alpha-B</fullName>
    </recommendedName>
</protein>
<feature type="initiator methionine" description="Removed" evidence="2">
    <location>
        <position position="1"/>
    </location>
</feature>
<feature type="chain" id="PRO_0000199107" description="Allophycocyanin subunit alpha-B">
    <location>
        <begin position="2"/>
        <end position="161"/>
    </location>
</feature>
<feature type="binding site" description="covalent" evidence="3">
    <location>
        <position position="81"/>
    </location>
    <ligand>
        <name>(2R,3E)-phycocyanobilin</name>
        <dbReference type="ChEBI" id="CHEBI:85275"/>
    </ligand>
</feature>
<feature type="modified residue" description="N4-methylasparagine" evidence="1">
    <location>
        <position position="71"/>
    </location>
</feature>
<sequence length="161" mass="17811">MTVISQVILQADDELRYPSSGELKSISDFLQTGVQRTRIVATLAENEKKIVQEATKQLWQKRPDFIAPGGNAYGERQRALCIRDFGWYLRLITYGVLAGDIEPIEKIGIIGVREMYNSLGVPVPGMVEAINSLKKASLDLLSSEDAAAAAPYFDYIIQAMS</sequence>
<evidence type="ECO:0000250" key="1"/>
<evidence type="ECO:0000269" key="2">
    <source>
    </source>
</evidence>
<evidence type="ECO:0000305" key="3"/>